<name>AROA_THENN</name>
<keyword id="KW-0028">Amino-acid biosynthesis</keyword>
<keyword id="KW-0057">Aromatic amino acid biosynthesis</keyword>
<keyword id="KW-0963">Cytoplasm</keyword>
<keyword id="KW-0808">Transferase</keyword>
<organism>
    <name type="scientific">Thermotoga neapolitana (strain ATCC 49049 / DSM 4359 / NBRC 107923 / NS-E)</name>
    <dbReference type="NCBI Taxonomy" id="309803"/>
    <lineage>
        <taxon>Bacteria</taxon>
        <taxon>Thermotogati</taxon>
        <taxon>Thermotogota</taxon>
        <taxon>Thermotogae</taxon>
        <taxon>Thermotogales</taxon>
        <taxon>Thermotogaceae</taxon>
        <taxon>Thermotoga</taxon>
    </lineage>
</organism>
<evidence type="ECO:0000255" key="1">
    <source>
        <dbReference type="HAMAP-Rule" id="MF_00210"/>
    </source>
</evidence>
<feature type="chain" id="PRO_1000124714" description="3-phosphoshikimate 1-carboxyvinyltransferase">
    <location>
        <begin position="1"/>
        <end position="421"/>
    </location>
</feature>
<feature type="active site" description="Proton acceptor" evidence="1">
    <location>
        <position position="307"/>
    </location>
</feature>
<feature type="binding site" evidence="1">
    <location>
        <position position="19"/>
    </location>
    <ligand>
        <name>3-phosphoshikimate</name>
        <dbReference type="ChEBI" id="CHEBI:145989"/>
    </ligand>
</feature>
<feature type="binding site" evidence="1">
    <location>
        <position position="19"/>
    </location>
    <ligand>
        <name>phosphoenolpyruvate</name>
        <dbReference type="ChEBI" id="CHEBI:58702"/>
    </ligand>
</feature>
<feature type="binding site" evidence="1">
    <location>
        <position position="20"/>
    </location>
    <ligand>
        <name>3-phosphoshikimate</name>
        <dbReference type="ChEBI" id="CHEBI:145989"/>
    </ligand>
</feature>
<feature type="binding site" evidence="1">
    <location>
        <position position="24"/>
    </location>
    <ligand>
        <name>3-phosphoshikimate</name>
        <dbReference type="ChEBI" id="CHEBI:145989"/>
    </ligand>
</feature>
<feature type="binding site" evidence="1">
    <location>
        <position position="88"/>
    </location>
    <ligand>
        <name>phosphoenolpyruvate</name>
        <dbReference type="ChEBI" id="CHEBI:58702"/>
    </ligand>
</feature>
<feature type="binding site" evidence="1">
    <location>
        <position position="116"/>
    </location>
    <ligand>
        <name>phosphoenolpyruvate</name>
        <dbReference type="ChEBI" id="CHEBI:58702"/>
    </ligand>
</feature>
<feature type="binding site" evidence="1">
    <location>
        <position position="160"/>
    </location>
    <ligand>
        <name>3-phosphoshikimate</name>
        <dbReference type="ChEBI" id="CHEBI:145989"/>
    </ligand>
</feature>
<feature type="binding site" evidence="1">
    <location>
        <position position="162"/>
    </location>
    <ligand>
        <name>3-phosphoshikimate</name>
        <dbReference type="ChEBI" id="CHEBI:145989"/>
    </ligand>
</feature>
<feature type="binding site" evidence="1">
    <location>
        <position position="162"/>
    </location>
    <ligand>
        <name>phosphoenolpyruvate</name>
        <dbReference type="ChEBI" id="CHEBI:58702"/>
    </ligand>
</feature>
<feature type="binding site" evidence="1">
    <location>
        <position position="307"/>
    </location>
    <ligand>
        <name>3-phosphoshikimate</name>
        <dbReference type="ChEBI" id="CHEBI:145989"/>
    </ligand>
</feature>
<feature type="binding site" evidence="1">
    <location>
        <position position="334"/>
    </location>
    <ligand>
        <name>3-phosphoshikimate</name>
        <dbReference type="ChEBI" id="CHEBI:145989"/>
    </ligand>
</feature>
<feature type="binding site" evidence="1">
    <location>
        <position position="338"/>
    </location>
    <ligand>
        <name>phosphoenolpyruvate</name>
        <dbReference type="ChEBI" id="CHEBI:58702"/>
    </ligand>
</feature>
<feature type="binding site" evidence="1">
    <location>
        <position position="380"/>
    </location>
    <ligand>
        <name>phosphoenolpyruvate</name>
        <dbReference type="ChEBI" id="CHEBI:58702"/>
    </ligand>
</feature>
<sequence length="421" mass="46467">MKVLPAKKVEGVLSVPPDKSITHRALILSALAESESTLYNLLRCLDTERTHDILEKLGTRFEGDWEKMKVFPKPFAEPIEPLFCGNSGTTTRLMSGVLASYEMFTVLYGDSSLSRRPMRRVIEPLEMMGARFMARQNNYLPMAIKGNHLSGISYKTPVASAQVKSAVLLAGLRASGRTIVIEPAKSRDHTERMLKNLGVPVEVEGTRVVLEPATFRGFTMKVPGDISSAAFFVVLGAIHPNARITVTDVGLNPTRTGLLEVMKLMGANLEWEITEENLEPIGTVRVETSPNLKGVVVPEHLVPLMIDELPLVALLGVFAEGETVVRNAEELRKKESDRIRVLVENFKRLGVEIEEFKDGFKIVGKQSIKGGSVDPEGDHRMAMLFSIAGLVSEEGVDVKDHECVAVSFPNFYELLERVVIS</sequence>
<proteinExistence type="inferred from homology"/>
<protein>
    <recommendedName>
        <fullName evidence="1">3-phosphoshikimate 1-carboxyvinyltransferase</fullName>
        <ecNumber evidence="1">2.5.1.19</ecNumber>
    </recommendedName>
    <alternativeName>
        <fullName evidence="1">5-enolpyruvylshikimate-3-phosphate synthase</fullName>
        <shortName evidence="1">EPSP synthase</shortName>
        <shortName evidence="1">EPSPS</shortName>
    </alternativeName>
</protein>
<reference key="1">
    <citation type="submission" date="2007-11" db="EMBL/GenBank/DDBJ databases">
        <title>The genome sequence of the hyperthermophilic bacterium Thermotoga neapolitana.</title>
        <authorList>
            <person name="Lim S.K."/>
            <person name="Kim J.S."/>
            <person name="Cha S.H."/>
            <person name="Park B.C."/>
            <person name="Lee D.S."/>
            <person name="Tae H.S."/>
            <person name="Kim S.-J."/>
            <person name="Kim J.J."/>
            <person name="Park K.J."/>
            <person name="Lee S.Y."/>
        </authorList>
    </citation>
    <scope>NUCLEOTIDE SEQUENCE [LARGE SCALE GENOMIC DNA]</scope>
    <source>
        <strain>ATCC 49049 / DSM 4359 / NBRC 107923 / NS-E</strain>
    </source>
</reference>
<comment type="function">
    <text evidence="1">Catalyzes the transfer of the enolpyruvyl moiety of phosphoenolpyruvate (PEP) to the 5-hydroxyl of shikimate-3-phosphate (S3P) to produce enolpyruvyl shikimate-3-phosphate and inorganic phosphate.</text>
</comment>
<comment type="catalytic activity">
    <reaction evidence="1">
        <text>3-phosphoshikimate + phosphoenolpyruvate = 5-O-(1-carboxyvinyl)-3-phosphoshikimate + phosphate</text>
        <dbReference type="Rhea" id="RHEA:21256"/>
        <dbReference type="ChEBI" id="CHEBI:43474"/>
        <dbReference type="ChEBI" id="CHEBI:57701"/>
        <dbReference type="ChEBI" id="CHEBI:58702"/>
        <dbReference type="ChEBI" id="CHEBI:145989"/>
        <dbReference type="EC" id="2.5.1.19"/>
    </reaction>
    <physiologicalReaction direction="left-to-right" evidence="1">
        <dbReference type="Rhea" id="RHEA:21257"/>
    </physiologicalReaction>
</comment>
<comment type="pathway">
    <text evidence="1">Metabolic intermediate biosynthesis; chorismate biosynthesis; chorismate from D-erythrose 4-phosphate and phosphoenolpyruvate: step 6/7.</text>
</comment>
<comment type="subunit">
    <text evidence="1">Monomer.</text>
</comment>
<comment type="subcellular location">
    <subcellularLocation>
        <location evidence="1">Cytoplasm</location>
    </subcellularLocation>
</comment>
<comment type="similarity">
    <text evidence="1">Belongs to the EPSP synthase family.</text>
</comment>
<gene>
    <name evidence="1" type="primary">aroA</name>
    <name type="ordered locus">CTN_0326</name>
</gene>
<accession>B9KBV6</accession>
<dbReference type="EC" id="2.5.1.19" evidence="1"/>
<dbReference type="EMBL" id="CP000916">
    <property type="protein sequence ID" value="ACM22502.1"/>
    <property type="molecule type" value="Genomic_DNA"/>
</dbReference>
<dbReference type="RefSeq" id="WP_015918829.1">
    <property type="nucleotide sequence ID" value="NC_011978.1"/>
</dbReference>
<dbReference type="SMR" id="B9KBV6"/>
<dbReference type="STRING" id="309803.CTN_0326"/>
<dbReference type="KEGG" id="tna:CTN_0326"/>
<dbReference type="eggNOG" id="COG0128">
    <property type="taxonomic scope" value="Bacteria"/>
</dbReference>
<dbReference type="HOGENOM" id="CLU_024321_0_1_0"/>
<dbReference type="UniPathway" id="UPA00053">
    <property type="reaction ID" value="UER00089"/>
</dbReference>
<dbReference type="Proteomes" id="UP000000445">
    <property type="component" value="Chromosome"/>
</dbReference>
<dbReference type="GO" id="GO:0005737">
    <property type="term" value="C:cytoplasm"/>
    <property type="evidence" value="ECO:0007669"/>
    <property type="project" value="UniProtKB-SubCell"/>
</dbReference>
<dbReference type="GO" id="GO:0003866">
    <property type="term" value="F:3-phosphoshikimate 1-carboxyvinyltransferase activity"/>
    <property type="evidence" value="ECO:0007669"/>
    <property type="project" value="UniProtKB-UniRule"/>
</dbReference>
<dbReference type="GO" id="GO:0008652">
    <property type="term" value="P:amino acid biosynthetic process"/>
    <property type="evidence" value="ECO:0007669"/>
    <property type="project" value="UniProtKB-KW"/>
</dbReference>
<dbReference type="GO" id="GO:0009073">
    <property type="term" value="P:aromatic amino acid family biosynthetic process"/>
    <property type="evidence" value="ECO:0007669"/>
    <property type="project" value="UniProtKB-KW"/>
</dbReference>
<dbReference type="GO" id="GO:0009423">
    <property type="term" value="P:chorismate biosynthetic process"/>
    <property type="evidence" value="ECO:0007669"/>
    <property type="project" value="UniProtKB-UniRule"/>
</dbReference>
<dbReference type="CDD" id="cd01556">
    <property type="entry name" value="EPSP_synthase"/>
    <property type="match status" value="1"/>
</dbReference>
<dbReference type="FunFam" id="3.65.10.10:FF:000005">
    <property type="entry name" value="3-phosphoshikimate 1-carboxyvinyltransferase"/>
    <property type="match status" value="1"/>
</dbReference>
<dbReference type="FunFam" id="3.65.10.10:FF:000006">
    <property type="entry name" value="3-phosphoshikimate 1-carboxyvinyltransferase"/>
    <property type="match status" value="1"/>
</dbReference>
<dbReference type="Gene3D" id="3.65.10.10">
    <property type="entry name" value="Enolpyruvate transferase domain"/>
    <property type="match status" value="2"/>
</dbReference>
<dbReference type="HAMAP" id="MF_00210">
    <property type="entry name" value="EPSP_synth"/>
    <property type="match status" value="1"/>
</dbReference>
<dbReference type="InterPro" id="IPR001986">
    <property type="entry name" value="Enolpyruvate_Tfrase_dom"/>
</dbReference>
<dbReference type="InterPro" id="IPR036968">
    <property type="entry name" value="Enolpyruvate_Tfrase_sf"/>
</dbReference>
<dbReference type="InterPro" id="IPR006264">
    <property type="entry name" value="EPSP_synthase"/>
</dbReference>
<dbReference type="InterPro" id="IPR023193">
    <property type="entry name" value="EPSP_synthase_CS"/>
</dbReference>
<dbReference type="InterPro" id="IPR013792">
    <property type="entry name" value="RNA3'P_cycl/enolpyr_Trfase_a/b"/>
</dbReference>
<dbReference type="NCBIfam" id="TIGR01356">
    <property type="entry name" value="aroA"/>
    <property type="match status" value="1"/>
</dbReference>
<dbReference type="PANTHER" id="PTHR21090">
    <property type="entry name" value="AROM/DEHYDROQUINATE SYNTHASE"/>
    <property type="match status" value="1"/>
</dbReference>
<dbReference type="PANTHER" id="PTHR21090:SF5">
    <property type="entry name" value="PENTAFUNCTIONAL AROM POLYPEPTIDE"/>
    <property type="match status" value="1"/>
</dbReference>
<dbReference type="Pfam" id="PF00275">
    <property type="entry name" value="EPSP_synthase"/>
    <property type="match status" value="1"/>
</dbReference>
<dbReference type="PIRSF" id="PIRSF000505">
    <property type="entry name" value="EPSPS"/>
    <property type="match status" value="1"/>
</dbReference>
<dbReference type="SUPFAM" id="SSF55205">
    <property type="entry name" value="EPT/RTPC-like"/>
    <property type="match status" value="1"/>
</dbReference>
<dbReference type="PROSITE" id="PS00104">
    <property type="entry name" value="EPSP_SYNTHASE_1"/>
    <property type="match status" value="1"/>
</dbReference>
<dbReference type="PROSITE" id="PS00885">
    <property type="entry name" value="EPSP_SYNTHASE_2"/>
    <property type="match status" value="1"/>
</dbReference>